<protein>
    <recommendedName>
        <fullName evidence="1">4-hydroxythreonine-4-phosphate dehydrogenase</fullName>
        <ecNumber evidence="1">1.1.1.262</ecNumber>
    </recommendedName>
    <alternativeName>
        <fullName evidence="1">4-(phosphohydroxy)-L-threonine dehydrogenase</fullName>
    </alternativeName>
</protein>
<accession>Q7NQA9</accession>
<organism>
    <name type="scientific">Chromobacterium violaceum (strain ATCC 12472 / DSM 30191 / JCM 1249 / CCUG 213 / NBRC 12614 / NCIMB 9131 / NCTC 9757 / MK)</name>
    <dbReference type="NCBI Taxonomy" id="243365"/>
    <lineage>
        <taxon>Bacteria</taxon>
        <taxon>Pseudomonadati</taxon>
        <taxon>Pseudomonadota</taxon>
        <taxon>Betaproteobacteria</taxon>
        <taxon>Neisseriales</taxon>
        <taxon>Chromobacteriaceae</taxon>
        <taxon>Chromobacterium</taxon>
    </lineage>
</organism>
<proteinExistence type="inferred from homology"/>
<feature type="chain" id="PRO_1000051495" description="4-hydroxythreonine-4-phosphate dehydrogenase">
    <location>
        <begin position="1"/>
        <end position="328"/>
    </location>
</feature>
<feature type="binding site" evidence="1">
    <location>
        <position position="133"/>
    </location>
    <ligand>
        <name>substrate</name>
    </ligand>
</feature>
<feature type="binding site" evidence="1">
    <location>
        <position position="134"/>
    </location>
    <ligand>
        <name>substrate</name>
    </ligand>
</feature>
<feature type="binding site" evidence="1">
    <location>
        <position position="163"/>
    </location>
    <ligand>
        <name>a divalent metal cation</name>
        <dbReference type="ChEBI" id="CHEBI:60240"/>
        <note>ligand shared between dimeric partners</note>
    </ligand>
</feature>
<feature type="binding site" evidence="1">
    <location>
        <position position="208"/>
    </location>
    <ligand>
        <name>a divalent metal cation</name>
        <dbReference type="ChEBI" id="CHEBI:60240"/>
        <note>ligand shared between dimeric partners</note>
    </ligand>
</feature>
<feature type="binding site" evidence="1">
    <location>
        <position position="263"/>
    </location>
    <ligand>
        <name>a divalent metal cation</name>
        <dbReference type="ChEBI" id="CHEBI:60240"/>
        <note>ligand shared between dimeric partners</note>
    </ligand>
</feature>
<feature type="binding site" evidence="1">
    <location>
        <position position="271"/>
    </location>
    <ligand>
        <name>substrate</name>
    </ligand>
</feature>
<feature type="binding site" evidence="1">
    <location>
        <position position="280"/>
    </location>
    <ligand>
        <name>substrate</name>
    </ligand>
</feature>
<feature type="binding site" evidence="1">
    <location>
        <position position="289"/>
    </location>
    <ligand>
        <name>substrate</name>
    </ligand>
</feature>
<name>PDXA_CHRVO</name>
<reference key="1">
    <citation type="journal article" date="2003" name="Proc. Natl. Acad. Sci. U.S.A.">
        <title>The complete genome sequence of Chromobacterium violaceum reveals remarkable and exploitable bacterial adaptability.</title>
        <authorList>
            <person name="Vasconcelos A.T.R."/>
            <person name="de Almeida D.F."/>
            <person name="Hungria M."/>
            <person name="Guimaraes C.T."/>
            <person name="Antonio R.V."/>
            <person name="Almeida F.C."/>
            <person name="de Almeida L.G.P."/>
            <person name="de Almeida R."/>
            <person name="Alves-Gomes J.A."/>
            <person name="Andrade E.M."/>
            <person name="Araripe J."/>
            <person name="de Araujo M.F.F."/>
            <person name="Astolfi-Filho S."/>
            <person name="Azevedo V."/>
            <person name="Baptista A.J."/>
            <person name="Bataus L.A.M."/>
            <person name="Batista J.S."/>
            <person name="Belo A."/>
            <person name="van den Berg C."/>
            <person name="Bogo M."/>
            <person name="Bonatto S."/>
            <person name="Bordignon J."/>
            <person name="Brigido M.M."/>
            <person name="Brito C.A."/>
            <person name="Brocchi M."/>
            <person name="Burity H.A."/>
            <person name="Camargo A.A."/>
            <person name="Cardoso D.D.P."/>
            <person name="Carneiro N.P."/>
            <person name="Carraro D.M."/>
            <person name="Carvalho C.M.B."/>
            <person name="Cascardo J.C.M."/>
            <person name="Cavada B.S."/>
            <person name="Chueire L.M.O."/>
            <person name="Creczynski-Pasa T.B."/>
            <person name="Cunha-Junior N.C."/>
            <person name="Fagundes N."/>
            <person name="Falcao C.L."/>
            <person name="Fantinatti F."/>
            <person name="Farias I.P."/>
            <person name="Felipe M.S.S."/>
            <person name="Ferrari L.P."/>
            <person name="Ferro J.A."/>
            <person name="Ferro M.I.T."/>
            <person name="Franco G.R."/>
            <person name="Freitas N.S.A."/>
            <person name="Furlan L.R."/>
            <person name="Gazzinelli R.T."/>
            <person name="Gomes E.A."/>
            <person name="Goncalves P.R."/>
            <person name="Grangeiro T.B."/>
            <person name="Grattapaglia D."/>
            <person name="Grisard E.C."/>
            <person name="Hanna E.S."/>
            <person name="Jardim S.N."/>
            <person name="Laurino J."/>
            <person name="Leoi L.C.T."/>
            <person name="Lima L.F.A."/>
            <person name="Loureiro M.F."/>
            <person name="Lyra M.C.C.P."/>
            <person name="Madeira H.M.F."/>
            <person name="Manfio G.P."/>
            <person name="Maranhao A.Q."/>
            <person name="Martins W.S."/>
            <person name="di Mauro S.M.Z."/>
            <person name="de Medeiros S.R.B."/>
            <person name="Meissner R.V."/>
            <person name="Moreira M.A.M."/>
            <person name="Nascimento F.F."/>
            <person name="Nicolas M.F."/>
            <person name="Oliveira J.G."/>
            <person name="Oliveira S.C."/>
            <person name="Paixao R.F.C."/>
            <person name="Parente J.A."/>
            <person name="Pedrosa F.O."/>
            <person name="Pena S.D.J."/>
            <person name="Pereira J.O."/>
            <person name="Pereira M."/>
            <person name="Pinto L.S.R.C."/>
            <person name="Pinto L.S."/>
            <person name="Porto J.I.R."/>
            <person name="Potrich D.P."/>
            <person name="Ramalho-Neto C.E."/>
            <person name="Reis A.M.M."/>
            <person name="Rigo L.U."/>
            <person name="Rondinelli E."/>
            <person name="Santos E.B.P."/>
            <person name="Santos F.R."/>
            <person name="Schneider M.P.C."/>
            <person name="Seuanez H.N."/>
            <person name="Silva A.M.R."/>
            <person name="da Silva A.L.C."/>
            <person name="Silva D.W."/>
            <person name="Silva R."/>
            <person name="Simoes I.C."/>
            <person name="Simon D."/>
            <person name="Soares C.M.A."/>
            <person name="Soares R.B.A."/>
            <person name="Souza E.M."/>
            <person name="Souza K.R.L."/>
            <person name="Souza R.C."/>
            <person name="Steffens M.B.R."/>
            <person name="Steindel M."/>
            <person name="Teixeira S.R."/>
            <person name="Urmenyi T."/>
            <person name="Vettore A."/>
            <person name="Wassem R."/>
            <person name="Zaha A."/>
            <person name="Simpson A.J.G."/>
        </authorList>
    </citation>
    <scope>NUCLEOTIDE SEQUENCE [LARGE SCALE GENOMIC DNA]</scope>
    <source>
        <strain>ATCC 12472 / DSM 30191 / JCM 1249 / CCUG 213 / NBRC 12614 / NCIMB 9131 / NCTC 9757 / MK</strain>
    </source>
</reference>
<keyword id="KW-0170">Cobalt</keyword>
<keyword id="KW-0963">Cytoplasm</keyword>
<keyword id="KW-0460">Magnesium</keyword>
<keyword id="KW-0479">Metal-binding</keyword>
<keyword id="KW-0520">NAD</keyword>
<keyword id="KW-0521">NADP</keyword>
<keyword id="KW-0560">Oxidoreductase</keyword>
<keyword id="KW-0664">Pyridoxine biosynthesis</keyword>
<keyword id="KW-1185">Reference proteome</keyword>
<keyword id="KW-0862">Zinc</keyword>
<gene>
    <name evidence="1" type="primary">pdxA</name>
    <name type="ordered locus">CV_4231</name>
</gene>
<evidence type="ECO:0000255" key="1">
    <source>
        <dbReference type="HAMAP-Rule" id="MF_00536"/>
    </source>
</evidence>
<sequence>MPKRPVLAVTAGEPAGIGPDLVLRLPELAPEARCVAIADHALLADRAAALGLNLELADYRRDRPAPAGALEVLHVPLAAPAQAGRLDPANGRYVLATLDAAIDGCVSGEFAAMVTAPVHKGVINDAGVPFTGHTEYLAERTGTGKVVMMLAGGGMRVALATTHLPLREVADAITAPLLNEVIRILHADLENKFGIDAPRILVAGLNPHAGEGGHMGREEIDVIEPALDALRAEGINLIGPLPADTLFNPDKLAAADAVLAMYHDQGLPVLKHASFGAGINVTLGLPIVRTSVDHGTALDLAGSGRADPGSLLEAVRLAEQLAGHAGRR</sequence>
<comment type="function">
    <text evidence="1">Catalyzes the NAD(P)-dependent oxidation of 4-(phosphooxy)-L-threonine (HTP) into 2-amino-3-oxo-4-(phosphooxy)butyric acid which spontaneously decarboxylates to form 3-amino-2-oxopropyl phosphate (AHAP).</text>
</comment>
<comment type="catalytic activity">
    <reaction evidence="1">
        <text>4-(phosphooxy)-L-threonine + NAD(+) = 3-amino-2-oxopropyl phosphate + CO2 + NADH</text>
        <dbReference type="Rhea" id="RHEA:32275"/>
        <dbReference type="ChEBI" id="CHEBI:16526"/>
        <dbReference type="ChEBI" id="CHEBI:57279"/>
        <dbReference type="ChEBI" id="CHEBI:57540"/>
        <dbReference type="ChEBI" id="CHEBI:57945"/>
        <dbReference type="ChEBI" id="CHEBI:58452"/>
        <dbReference type="EC" id="1.1.1.262"/>
    </reaction>
</comment>
<comment type="cofactor">
    <cofactor evidence="1">
        <name>Zn(2+)</name>
        <dbReference type="ChEBI" id="CHEBI:29105"/>
    </cofactor>
    <cofactor evidence="1">
        <name>Mg(2+)</name>
        <dbReference type="ChEBI" id="CHEBI:18420"/>
    </cofactor>
    <cofactor evidence="1">
        <name>Co(2+)</name>
        <dbReference type="ChEBI" id="CHEBI:48828"/>
    </cofactor>
    <text evidence="1">Binds 1 divalent metal cation per subunit. Can use ions such as Zn(2+), Mg(2+) or Co(2+).</text>
</comment>
<comment type="pathway">
    <text evidence="1">Cofactor biosynthesis; pyridoxine 5'-phosphate biosynthesis; pyridoxine 5'-phosphate from D-erythrose 4-phosphate: step 4/5.</text>
</comment>
<comment type="subunit">
    <text evidence="1">Homodimer.</text>
</comment>
<comment type="subcellular location">
    <subcellularLocation>
        <location evidence="1">Cytoplasm</location>
    </subcellularLocation>
</comment>
<comment type="miscellaneous">
    <text evidence="1">The active site is located at the dimer interface.</text>
</comment>
<comment type="similarity">
    <text evidence="1">Belongs to the PdxA family.</text>
</comment>
<dbReference type="EC" id="1.1.1.262" evidence="1"/>
<dbReference type="EMBL" id="AE016825">
    <property type="protein sequence ID" value="AAQ61891.1"/>
    <property type="molecule type" value="Genomic_DNA"/>
</dbReference>
<dbReference type="RefSeq" id="WP_011137777.1">
    <property type="nucleotide sequence ID" value="NC_005085.1"/>
</dbReference>
<dbReference type="SMR" id="Q7NQA9"/>
<dbReference type="STRING" id="243365.CV_4231"/>
<dbReference type="KEGG" id="cvi:CV_4231"/>
<dbReference type="eggNOG" id="COG1995">
    <property type="taxonomic scope" value="Bacteria"/>
</dbReference>
<dbReference type="HOGENOM" id="CLU_040168_2_0_4"/>
<dbReference type="OrthoDB" id="9801783at2"/>
<dbReference type="UniPathway" id="UPA00244">
    <property type="reaction ID" value="UER00312"/>
</dbReference>
<dbReference type="Proteomes" id="UP000001424">
    <property type="component" value="Chromosome"/>
</dbReference>
<dbReference type="GO" id="GO:0005737">
    <property type="term" value="C:cytoplasm"/>
    <property type="evidence" value="ECO:0007669"/>
    <property type="project" value="UniProtKB-SubCell"/>
</dbReference>
<dbReference type="GO" id="GO:0050570">
    <property type="term" value="F:4-hydroxythreonine-4-phosphate dehydrogenase activity"/>
    <property type="evidence" value="ECO:0007669"/>
    <property type="project" value="UniProtKB-UniRule"/>
</dbReference>
<dbReference type="GO" id="GO:0050897">
    <property type="term" value="F:cobalt ion binding"/>
    <property type="evidence" value="ECO:0007669"/>
    <property type="project" value="UniProtKB-UniRule"/>
</dbReference>
<dbReference type="GO" id="GO:0000287">
    <property type="term" value="F:magnesium ion binding"/>
    <property type="evidence" value="ECO:0007669"/>
    <property type="project" value="UniProtKB-UniRule"/>
</dbReference>
<dbReference type="GO" id="GO:0051287">
    <property type="term" value="F:NAD binding"/>
    <property type="evidence" value="ECO:0007669"/>
    <property type="project" value="InterPro"/>
</dbReference>
<dbReference type="GO" id="GO:0008270">
    <property type="term" value="F:zinc ion binding"/>
    <property type="evidence" value="ECO:0007669"/>
    <property type="project" value="UniProtKB-UniRule"/>
</dbReference>
<dbReference type="GO" id="GO:0042823">
    <property type="term" value="P:pyridoxal phosphate biosynthetic process"/>
    <property type="evidence" value="ECO:0007669"/>
    <property type="project" value="UniProtKB-UniRule"/>
</dbReference>
<dbReference type="GO" id="GO:0008615">
    <property type="term" value="P:pyridoxine biosynthetic process"/>
    <property type="evidence" value="ECO:0007669"/>
    <property type="project" value="UniProtKB-UniRule"/>
</dbReference>
<dbReference type="Gene3D" id="3.40.718.10">
    <property type="entry name" value="Isopropylmalate Dehydrogenase"/>
    <property type="match status" value="1"/>
</dbReference>
<dbReference type="HAMAP" id="MF_00536">
    <property type="entry name" value="PdxA"/>
    <property type="match status" value="1"/>
</dbReference>
<dbReference type="InterPro" id="IPR037510">
    <property type="entry name" value="PdxA"/>
</dbReference>
<dbReference type="InterPro" id="IPR005255">
    <property type="entry name" value="PdxA_fam"/>
</dbReference>
<dbReference type="NCBIfam" id="TIGR00557">
    <property type="entry name" value="pdxA"/>
    <property type="match status" value="1"/>
</dbReference>
<dbReference type="PANTHER" id="PTHR30004">
    <property type="entry name" value="4-HYDROXYTHREONINE-4-PHOSPHATE DEHYDROGENASE"/>
    <property type="match status" value="1"/>
</dbReference>
<dbReference type="PANTHER" id="PTHR30004:SF5">
    <property type="entry name" value="4-HYDROXYTHREONINE-4-PHOSPHATE DEHYDROGENASE"/>
    <property type="match status" value="1"/>
</dbReference>
<dbReference type="Pfam" id="PF04166">
    <property type="entry name" value="PdxA"/>
    <property type="match status" value="1"/>
</dbReference>
<dbReference type="SUPFAM" id="SSF53659">
    <property type="entry name" value="Isocitrate/Isopropylmalate dehydrogenase-like"/>
    <property type="match status" value="1"/>
</dbReference>